<organism>
    <name type="scientific">Spinacia oleracea</name>
    <name type="common">Spinach</name>
    <dbReference type="NCBI Taxonomy" id="3562"/>
    <lineage>
        <taxon>Eukaryota</taxon>
        <taxon>Viridiplantae</taxon>
        <taxon>Streptophyta</taxon>
        <taxon>Embryophyta</taxon>
        <taxon>Tracheophyta</taxon>
        <taxon>Spermatophyta</taxon>
        <taxon>Magnoliopsida</taxon>
        <taxon>eudicotyledons</taxon>
        <taxon>Gunneridae</taxon>
        <taxon>Pentapetalae</taxon>
        <taxon>Caryophyllales</taxon>
        <taxon>Chenopodiaceae</taxon>
        <taxon>Chenopodioideae</taxon>
        <taxon>Anserineae</taxon>
        <taxon>Spinacia</taxon>
    </lineage>
</organism>
<dbReference type="EMBL" id="AJ400848">
    <property type="protein sequence ID" value="CAB88751.1"/>
    <property type="molecule type" value="Genomic_DNA"/>
</dbReference>
<dbReference type="PIR" id="S26228">
    <property type="entry name" value="S26228"/>
</dbReference>
<dbReference type="RefSeq" id="NP_054958.1">
    <property type="nucleotide sequence ID" value="NC_002202.1"/>
</dbReference>
<dbReference type="PDB" id="4V61">
    <property type="method" value="EM"/>
    <property type="resolution" value="9.40 A"/>
    <property type="chains" value="BS=1-119"/>
</dbReference>
<dbReference type="PDB" id="5H1S">
    <property type="method" value="EM"/>
    <property type="resolution" value="3.50 A"/>
    <property type="chains" value="S=2-128"/>
</dbReference>
<dbReference type="PDB" id="5MLC">
    <property type="method" value="EM"/>
    <property type="resolution" value="3.90 A"/>
    <property type="chains" value="S=1-128"/>
</dbReference>
<dbReference type="PDB" id="5MMI">
    <property type="method" value="EM"/>
    <property type="resolution" value="3.25 A"/>
    <property type="chains" value="R=1-128"/>
</dbReference>
<dbReference type="PDB" id="5MMM">
    <property type="method" value="EM"/>
    <property type="resolution" value="3.40 A"/>
    <property type="chains" value="R=1-128"/>
</dbReference>
<dbReference type="PDB" id="5X8P">
    <property type="method" value="EM"/>
    <property type="resolution" value="3.40 A"/>
    <property type="chains" value="R=2-128"/>
</dbReference>
<dbReference type="PDB" id="5X8T">
    <property type="method" value="EM"/>
    <property type="resolution" value="3.30 A"/>
    <property type="chains" value="R=2-128"/>
</dbReference>
<dbReference type="PDB" id="6ERI">
    <property type="method" value="EM"/>
    <property type="resolution" value="3.00 A"/>
    <property type="chains" value="AQ=2-116"/>
</dbReference>
<dbReference type="PDBsum" id="4V61"/>
<dbReference type="PDBsum" id="5H1S"/>
<dbReference type="PDBsum" id="5MLC"/>
<dbReference type="PDBsum" id="5MMI"/>
<dbReference type="PDBsum" id="5MMM"/>
<dbReference type="PDBsum" id="5X8P"/>
<dbReference type="PDBsum" id="5X8T"/>
<dbReference type="PDBsum" id="6ERI"/>
<dbReference type="EMDB" id="EMD-3525"/>
<dbReference type="EMDB" id="EMD-3531"/>
<dbReference type="EMDB" id="EMD-3533"/>
<dbReference type="EMDB" id="EMD-3941"/>
<dbReference type="EMDB" id="EMD-6709"/>
<dbReference type="EMDB" id="EMD-6711"/>
<dbReference type="EMDB" id="EMD-9572"/>
<dbReference type="SMR" id="P28803"/>
<dbReference type="FunCoup" id="P28803">
    <property type="interactions" value="44"/>
</dbReference>
<dbReference type="IntAct" id="P28803">
    <property type="interactions" value="1"/>
</dbReference>
<dbReference type="STRING" id="3562.P28803"/>
<dbReference type="GeneID" id="2715626"/>
<dbReference type="KEGG" id="soe:2715626"/>
<dbReference type="InParanoid" id="P28803"/>
<dbReference type="OrthoDB" id="10251781at2759"/>
<dbReference type="Proteomes" id="UP001155700">
    <property type="component" value="Chloroplast Pltd"/>
</dbReference>
<dbReference type="GO" id="GO:0009507">
    <property type="term" value="C:chloroplast"/>
    <property type="evidence" value="ECO:0007669"/>
    <property type="project" value="UniProtKB-SubCell"/>
</dbReference>
<dbReference type="GO" id="GO:1990904">
    <property type="term" value="C:ribonucleoprotein complex"/>
    <property type="evidence" value="ECO:0007669"/>
    <property type="project" value="UniProtKB-KW"/>
</dbReference>
<dbReference type="GO" id="GO:0005840">
    <property type="term" value="C:ribosome"/>
    <property type="evidence" value="ECO:0007669"/>
    <property type="project" value="UniProtKB-KW"/>
</dbReference>
<dbReference type="GO" id="GO:0019843">
    <property type="term" value="F:rRNA binding"/>
    <property type="evidence" value="ECO:0007669"/>
    <property type="project" value="UniProtKB-UniRule"/>
</dbReference>
<dbReference type="GO" id="GO:0003735">
    <property type="term" value="F:structural constituent of ribosome"/>
    <property type="evidence" value="ECO:0000318"/>
    <property type="project" value="GO_Central"/>
</dbReference>
<dbReference type="GO" id="GO:0000027">
    <property type="term" value="P:ribosomal large subunit assembly"/>
    <property type="evidence" value="ECO:0007669"/>
    <property type="project" value="UniProtKB-UniRule"/>
</dbReference>
<dbReference type="GO" id="GO:0006412">
    <property type="term" value="P:translation"/>
    <property type="evidence" value="ECO:0007669"/>
    <property type="project" value="InterPro"/>
</dbReference>
<dbReference type="CDD" id="cd07026">
    <property type="entry name" value="Ribosomal_L20"/>
    <property type="match status" value="1"/>
</dbReference>
<dbReference type="FunFam" id="1.10.1900.20:FF:000001">
    <property type="entry name" value="50S ribosomal protein L20"/>
    <property type="match status" value="1"/>
</dbReference>
<dbReference type="Gene3D" id="6.10.160.10">
    <property type="match status" value="1"/>
</dbReference>
<dbReference type="Gene3D" id="1.10.1900.20">
    <property type="entry name" value="Ribosomal protein L20"/>
    <property type="match status" value="1"/>
</dbReference>
<dbReference type="HAMAP" id="MF_00382">
    <property type="entry name" value="Ribosomal_bL20"/>
    <property type="match status" value="1"/>
</dbReference>
<dbReference type="InterPro" id="IPR005813">
    <property type="entry name" value="Ribosomal_bL20"/>
</dbReference>
<dbReference type="InterPro" id="IPR049946">
    <property type="entry name" value="RIBOSOMAL_L20_CS"/>
</dbReference>
<dbReference type="InterPro" id="IPR035566">
    <property type="entry name" value="Ribosomal_protein_bL20_C"/>
</dbReference>
<dbReference type="NCBIfam" id="TIGR01032">
    <property type="entry name" value="rplT_bact"/>
    <property type="match status" value="1"/>
</dbReference>
<dbReference type="PANTHER" id="PTHR10986">
    <property type="entry name" value="39S RIBOSOMAL PROTEIN L20"/>
    <property type="match status" value="1"/>
</dbReference>
<dbReference type="Pfam" id="PF00453">
    <property type="entry name" value="Ribosomal_L20"/>
    <property type="match status" value="1"/>
</dbReference>
<dbReference type="PRINTS" id="PR00062">
    <property type="entry name" value="RIBOSOMALL20"/>
</dbReference>
<dbReference type="SUPFAM" id="SSF74731">
    <property type="entry name" value="Ribosomal protein L20"/>
    <property type="match status" value="1"/>
</dbReference>
<dbReference type="PROSITE" id="PS00937">
    <property type="entry name" value="RIBOSOMAL_L20"/>
    <property type="match status" value="1"/>
</dbReference>
<geneLocation type="chloroplast"/>
<protein>
    <recommendedName>
        <fullName evidence="5">Large ribosomal subunit protein bL20c</fullName>
    </recommendedName>
    <alternativeName>
        <fullName evidence="4">50S ribosomal protein L20, chloroplastic</fullName>
    </alternativeName>
</protein>
<keyword id="KW-0002">3D-structure</keyword>
<keyword id="KW-0150">Chloroplast</keyword>
<keyword id="KW-0903">Direct protein sequencing</keyword>
<keyword id="KW-0934">Plastid</keyword>
<keyword id="KW-1185">Reference proteome</keyword>
<keyword id="KW-0687">Ribonucleoprotein</keyword>
<keyword id="KW-0689">Ribosomal protein</keyword>
<keyword id="KW-0694">RNA-binding</keyword>
<keyword id="KW-0699">rRNA-binding</keyword>
<sequence>MTRVKRGYIARRRRKKIRFFASSFRGAHSRLTRTIAQQKIRALVSAHRDRDRQKRDFRRLWITRINAAIRERGVYYNYSKFIHDLYKRQLLLNRKILAQIAILNPNCIYMIYNEIIKKEDCKKYLEII</sequence>
<name>RK20_SPIOL</name>
<proteinExistence type="evidence at protein level"/>
<feature type="initiator methionine" description="Removed" evidence="1 2">
    <location>
        <position position="1"/>
    </location>
</feature>
<feature type="chain" id="PRO_0000177312" description="Large ribosomal subunit protein bL20c">
    <location>
        <begin position="2"/>
        <end position="128"/>
    </location>
</feature>
<feature type="sequence conflict" description="In Ref. 2; AA sequence." evidence="6" ref="2">
    <original>K</original>
    <variation>E</variation>
    <location>
        <position position="16"/>
    </location>
</feature>
<feature type="helix" evidence="9">
    <location>
        <begin position="9"/>
        <end position="18"/>
    </location>
</feature>
<feature type="turn" evidence="9">
    <location>
        <begin position="19"/>
        <end position="23"/>
    </location>
</feature>
<feature type="helix" evidence="9">
    <location>
        <begin position="26"/>
        <end position="28"/>
    </location>
</feature>
<feature type="helix" evidence="9">
    <location>
        <begin position="32"/>
        <end position="70"/>
    </location>
</feature>
<feature type="strand" evidence="10">
    <location>
        <begin position="73"/>
        <end position="75"/>
    </location>
</feature>
<feature type="helix" evidence="9">
    <location>
        <begin position="78"/>
        <end position="87"/>
    </location>
</feature>
<feature type="helix" evidence="9">
    <location>
        <begin position="94"/>
        <end position="103"/>
    </location>
</feature>
<feature type="helix" evidence="9">
    <location>
        <begin position="105"/>
        <end position="119"/>
    </location>
</feature>
<comment type="function">
    <text evidence="7 8">Component of the chloroplast ribosome (chloro-ribosome), a dedicated translation machinery responsible for the synthesis of chloroplast genome-encoded proteins, including proteins of the transcription and translation machinery and components of the photosynthetic apparatus.</text>
</comment>
<comment type="subunit">
    <text evidence="1 3">Component of the chloroplast large ribosomal subunit (LSU). Mature 70S chloroplast ribosomes of higher plants consist of a small (30S) and a large (50S) subunit. The 30S small subunit contains 1 molecule of ribosomal RNA (16S rRNA) and 24 different proteins. The 50S large subunit contains 3 rRNA molecules (23S, 5S and 4.5S rRNA) and 33 different proteins.</text>
</comment>
<comment type="subcellular location">
    <subcellularLocation>
        <location evidence="1 3">Plastid</location>
        <location evidence="1 3">Chloroplast</location>
    </subcellularLocation>
</comment>
<comment type="similarity">
    <text evidence="6">Belongs to the bacterial ribosomal protein bL20 family.</text>
</comment>
<gene>
    <name type="primary">rpl20</name>
</gene>
<accession>P28803</accession>
<accession>Q9M3K6</accession>
<reference key="1">
    <citation type="journal article" date="2001" name="Plant Mol. Biol.">
        <title>The plastid chromosome of spinach (Spinacia oleracea): complete nucleotide sequence and gene organization.</title>
        <authorList>
            <person name="Schmitz-Linneweber C."/>
            <person name="Maier R.M."/>
            <person name="Alcaraz J.-P."/>
            <person name="Cottet A."/>
            <person name="Herrmann R.G."/>
            <person name="Mache R."/>
        </authorList>
    </citation>
    <scope>NUCLEOTIDE SEQUENCE [LARGE SCALE GENOMIC DNA]</scope>
    <source>
        <strain>cv. Geant d'hiver</strain>
        <strain>cv. Monatol</strain>
    </source>
</reference>
<reference key="2">
    <citation type="journal article" date="1992" name="Plant Mol. Biol.">
        <title>Purification and characterization of seven chloroplast ribosomal proteins: evidence that organelle ribosomal protein genes are functional and that NH2-terminal processing occurs via multiple pathways in chloroplasts.</title>
        <authorList>
            <person name="Schmidt J."/>
            <person name="Herfurth E."/>
            <person name="Subramanian A.R."/>
        </authorList>
    </citation>
    <scope>PROTEIN SEQUENCE OF 2-27</scope>
    <source>
        <strain>cv. Alwaro</strain>
    </source>
</reference>
<reference key="3">
    <citation type="journal article" date="2000" name="J. Biol. Chem.">
        <title>The plastid ribosomal proteins. Identification of all the proteins in the 50S subunit of an organelle ribosome (chloroplast).</title>
        <authorList>
            <person name="Yamaguchi K."/>
            <person name="Subramanian A.R."/>
        </authorList>
    </citation>
    <scope>PROTEIN SEQUENCE OF 2-9</scope>
    <scope>SUBUNIT</scope>
    <scope>SUBCELLULAR LOCATION</scope>
    <source>
        <strain>cv. Alwaro</strain>
        <tissue>Leaf</tissue>
    </source>
</reference>
<reference key="4">
    <citation type="journal article" date="2007" name="Proc. Natl. Acad. Sci. U.S.A.">
        <title>Cryo-EM study of the spinach chloroplast ribosome reveals the structural and functional roles of plastid-specific ribosomal proteins.</title>
        <authorList>
            <person name="Sharma M.R."/>
            <person name="Wilson D.N."/>
            <person name="Datta P.P."/>
            <person name="Barat C."/>
            <person name="Schluenzen F."/>
            <person name="Fucini P."/>
            <person name="Agrawal R.K."/>
        </authorList>
    </citation>
    <scope>STRUCTURE BY ELECTRON MICROSCOPY (9.4 ANGSTROMS)</scope>
</reference>
<reference key="5">
    <citation type="journal article" date="2016" name="Sci. Rep.">
        <title>Cryo-EM structure of the large subunit of the spinach chloroplast ribosome.</title>
        <authorList>
            <person name="Ahmed T."/>
            <person name="Yin Z."/>
            <person name="Bhushan S."/>
        </authorList>
    </citation>
    <scope>STRUCTURE BY ELECTRON MICROSCOPY (3.50 ANGSTROMS)</scope>
</reference>
<reference key="6">
    <citation type="journal article" date="2017" name="EMBO J.">
        <title>The complete structure of the chloroplast 70S ribosome in complex with translation factor pY.</title>
        <authorList>
            <person name="Bieri P."/>
            <person name="Leibundgut M."/>
            <person name="Saurer M."/>
            <person name="Boehringer D."/>
            <person name="Ban N."/>
        </authorList>
    </citation>
    <scope>STRUCTURE BY ELECTRON MICROSCOPY (3.25 ANGSTROMS)</scope>
    <scope>SUBUNIT</scope>
    <scope>SUBCELLULAR LOCATION</scope>
</reference>
<evidence type="ECO:0000269" key="1">
    <source>
    </source>
</evidence>
<evidence type="ECO:0000269" key="2">
    <source>
    </source>
</evidence>
<evidence type="ECO:0000269" key="3">
    <source>
    </source>
</evidence>
<evidence type="ECO:0000303" key="4">
    <source>
    </source>
</evidence>
<evidence type="ECO:0000303" key="5">
    <source>
    </source>
</evidence>
<evidence type="ECO:0000305" key="6"/>
<evidence type="ECO:0000305" key="7">
    <source>
    </source>
</evidence>
<evidence type="ECO:0000305" key="8">
    <source>
    </source>
</evidence>
<evidence type="ECO:0007829" key="9">
    <source>
        <dbReference type="PDB" id="5MMI"/>
    </source>
</evidence>
<evidence type="ECO:0007829" key="10">
    <source>
        <dbReference type="PDB" id="5X8T"/>
    </source>
</evidence>